<keyword id="KW-0067">ATP-binding</keyword>
<keyword id="KW-0227">DNA damage</keyword>
<keyword id="KW-0234">DNA repair</keyword>
<keyword id="KW-0238">DNA-binding</keyword>
<keyword id="KW-0547">Nucleotide-binding</keyword>
<keyword id="KW-1185">Reference proteome</keyword>
<protein>
    <recommendedName>
        <fullName evidence="1">DNA mismatch repair protein MutS</fullName>
    </recommendedName>
</protein>
<dbReference type="EMBL" id="CP000097">
    <property type="protein sequence ID" value="ABB25056.1"/>
    <property type="molecule type" value="Genomic_DNA"/>
</dbReference>
<dbReference type="RefSeq" id="WP_011358923.1">
    <property type="nucleotide sequence ID" value="NC_007513.1"/>
</dbReference>
<dbReference type="SMR" id="Q3B0S2"/>
<dbReference type="STRING" id="316279.Syncc9902_0081"/>
<dbReference type="KEGG" id="sye:Syncc9902_0081"/>
<dbReference type="eggNOG" id="COG0249">
    <property type="taxonomic scope" value="Bacteria"/>
</dbReference>
<dbReference type="HOGENOM" id="CLU_002472_3_1_3"/>
<dbReference type="OrthoDB" id="9802448at2"/>
<dbReference type="Proteomes" id="UP000002712">
    <property type="component" value="Chromosome"/>
</dbReference>
<dbReference type="GO" id="GO:0005829">
    <property type="term" value="C:cytosol"/>
    <property type="evidence" value="ECO:0007669"/>
    <property type="project" value="TreeGrafter"/>
</dbReference>
<dbReference type="GO" id="GO:0005524">
    <property type="term" value="F:ATP binding"/>
    <property type="evidence" value="ECO:0007669"/>
    <property type="project" value="UniProtKB-UniRule"/>
</dbReference>
<dbReference type="GO" id="GO:0140664">
    <property type="term" value="F:ATP-dependent DNA damage sensor activity"/>
    <property type="evidence" value="ECO:0007669"/>
    <property type="project" value="InterPro"/>
</dbReference>
<dbReference type="GO" id="GO:0003684">
    <property type="term" value="F:damaged DNA binding"/>
    <property type="evidence" value="ECO:0007669"/>
    <property type="project" value="UniProtKB-UniRule"/>
</dbReference>
<dbReference type="GO" id="GO:0030983">
    <property type="term" value="F:mismatched DNA binding"/>
    <property type="evidence" value="ECO:0007669"/>
    <property type="project" value="InterPro"/>
</dbReference>
<dbReference type="GO" id="GO:0006298">
    <property type="term" value="P:mismatch repair"/>
    <property type="evidence" value="ECO:0007669"/>
    <property type="project" value="UniProtKB-UniRule"/>
</dbReference>
<dbReference type="CDD" id="cd03284">
    <property type="entry name" value="ABC_MutS1"/>
    <property type="match status" value="1"/>
</dbReference>
<dbReference type="FunFam" id="1.10.1420.10:FF:000001">
    <property type="entry name" value="DNA mismatch repair protein MutS"/>
    <property type="match status" value="1"/>
</dbReference>
<dbReference type="FunFam" id="3.40.50.300:FF:000870">
    <property type="entry name" value="MutS protein homolog 4"/>
    <property type="match status" value="1"/>
</dbReference>
<dbReference type="Gene3D" id="1.10.1420.10">
    <property type="match status" value="2"/>
</dbReference>
<dbReference type="Gene3D" id="3.40.1170.10">
    <property type="entry name" value="DNA repair protein MutS, domain I"/>
    <property type="match status" value="1"/>
</dbReference>
<dbReference type="Gene3D" id="3.30.420.110">
    <property type="entry name" value="MutS, connector domain"/>
    <property type="match status" value="1"/>
</dbReference>
<dbReference type="Gene3D" id="3.40.50.300">
    <property type="entry name" value="P-loop containing nucleotide triphosphate hydrolases"/>
    <property type="match status" value="1"/>
</dbReference>
<dbReference type="HAMAP" id="MF_00096">
    <property type="entry name" value="MutS"/>
    <property type="match status" value="1"/>
</dbReference>
<dbReference type="InterPro" id="IPR005748">
    <property type="entry name" value="DNA_mismatch_repair_MutS"/>
</dbReference>
<dbReference type="InterPro" id="IPR007695">
    <property type="entry name" value="DNA_mismatch_repair_MutS-lik_N"/>
</dbReference>
<dbReference type="InterPro" id="IPR017261">
    <property type="entry name" value="DNA_mismatch_repair_MutS/MSH"/>
</dbReference>
<dbReference type="InterPro" id="IPR000432">
    <property type="entry name" value="DNA_mismatch_repair_MutS_C"/>
</dbReference>
<dbReference type="InterPro" id="IPR007861">
    <property type="entry name" value="DNA_mismatch_repair_MutS_clamp"/>
</dbReference>
<dbReference type="InterPro" id="IPR007696">
    <property type="entry name" value="DNA_mismatch_repair_MutS_core"/>
</dbReference>
<dbReference type="InterPro" id="IPR016151">
    <property type="entry name" value="DNA_mismatch_repair_MutS_N"/>
</dbReference>
<dbReference type="InterPro" id="IPR036187">
    <property type="entry name" value="DNA_mismatch_repair_MutS_sf"/>
</dbReference>
<dbReference type="InterPro" id="IPR007860">
    <property type="entry name" value="DNA_mmatch_repair_MutS_con_dom"/>
</dbReference>
<dbReference type="InterPro" id="IPR045076">
    <property type="entry name" value="MutS"/>
</dbReference>
<dbReference type="InterPro" id="IPR036678">
    <property type="entry name" value="MutS_con_dom_sf"/>
</dbReference>
<dbReference type="InterPro" id="IPR027417">
    <property type="entry name" value="P-loop_NTPase"/>
</dbReference>
<dbReference type="NCBIfam" id="TIGR01070">
    <property type="entry name" value="mutS1"/>
    <property type="match status" value="1"/>
</dbReference>
<dbReference type="NCBIfam" id="NF003810">
    <property type="entry name" value="PRK05399.1"/>
    <property type="match status" value="1"/>
</dbReference>
<dbReference type="PANTHER" id="PTHR11361:SF34">
    <property type="entry name" value="DNA MISMATCH REPAIR PROTEIN MSH1, MITOCHONDRIAL"/>
    <property type="match status" value="1"/>
</dbReference>
<dbReference type="PANTHER" id="PTHR11361">
    <property type="entry name" value="DNA MISMATCH REPAIR PROTEIN MUTS FAMILY MEMBER"/>
    <property type="match status" value="1"/>
</dbReference>
<dbReference type="Pfam" id="PF01624">
    <property type="entry name" value="MutS_I"/>
    <property type="match status" value="1"/>
</dbReference>
<dbReference type="Pfam" id="PF05188">
    <property type="entry name" value="MutS_II"/>
    <property type="match status" value="1"/>
</dbReference>
<dbReference type="Pfam" id="PF05192">
    <property type="entry name" value="MutS_III"/>
    <property type="match status" value="1"/>
</dbReference>
<dbReference type="Pfam" id="PF05190">
    <property type="entry name" value="MutS_IV"/>
    <property type="match status" value="1"/>
</dbReference>
<dbReference type="Pfam" id="PF00488">
    <property type="entry name" value="MutS_V"/>
    <property type="match status" value="1"/>
</dbReference>
<dbReference type="PIRSF" id="PIRSF037677">
    <property type="entry name" value="DNA_mis_repair_Msh6"/>
    <property type="match status" value="1"/>
</dbReference>
<dbReference type="SMART" id="SM00534">
    <property type="entry name" value="MUTSac"/>
    <property type="match status" value="1"/>
</dbReference>
<dbReference type="SMART" id="SM00533">
    <property type="entry name" value="MUTSd"/>
    <property type="match status" value="1"/>
</dbReference>
<dbReference type="SUPFAM" id="SSF55271">
    <property type="entry name" value="DNA repair protein MutS, domain I"/>
    <property type="match status" value="1"/>
</dbReference>
<dbReference type="SUPFAM" id="SSF53150">
    <property type="entry name" value="DNA repair protein MutS, domain II"/>
    <property type="match status" value="1"/>
</dbReference>
<dbReference type="SUPFAM" id="SSF48334">
    <property type="entry name" value="DNA repair protein MutS, domain III"/>
    <property type="match status" value="1"/>
</dbReference>
<dbReference type="SUPFAM" id="SSF52540">
    <property type="entry name" value="P-loop containing nucleoside triphosphate hydrolases"/>
    <property type="match status" value="1"/>
</dbReference>
<dbReference type="PROSITE" id="PS00486">
    <property type="entry name" value="DNA_MISMATCH_REPAIR_2"/>
    <property type="match status" value="1"/>
</dbReference>
<reference key="1">
    <citation type="submission" date="2005-08" db="EMBL/GenBank/DDBJ databases">
        <title>Complete sequence of Synechococcus sp. CC9902.</title>
        <authorList>
            <person name="Copeland A."/>
            <person name="Lucas S."/>
            <person name="Lapidus A."/>
            <person name="Barry K."/>
            <person name="Detter J.C."/>
            <person name="Glavina T."/>
            <person name="Hammon N."/>
            <person name="Israni S."/>
            <person name="Pitluck S."/>
            <person name="Martinez M."/>
            <person name="Schmutz J."/>
            <person name="Larimer F."/>
            <person name="Land M."/>
            <person name="Kyrpides N."/>
            <person name="Ivanova N."/>
            <person name="Richardson P."/>
        </authorList>
    </citation>
    <scope>NUCLEOTIDE SEQUENCE [LARGE SCALE GENOMIC DNA]</scope>
    <source>
        <strain>CC9902</strain>
    </source>
</reference>
<comment type="function">
    <text evidence="1">This protein is involved in the repair of mismatches in DNA. It is possible that it carries out the mismatch recognition step. This protein has a weak ATPase activity.</text>
</comment>
<comment type="similarity">
    <text evidence="1">Belongs to the DNA mismatch repair MutS family.</text>
</comment>
<name>MUTS_SYNS9</name>
<gene>
    <name evidence="1" type="primary">mutS</name>
    <name type="ordered locus">Syncc9902_0081</name>
</gene>
<evidence type="ECO:0000255" key="1">
    <source>
        <dbReference type="HAMAP-Rule" id="MF_00096"/>
    </source>
</evidence>
<evidence type="ECO:0000256" key="2">
    <source>
        <dbReference type="SAM" id="MobiDB-lite"/>
    </source>
</evidence>
<proteinExistence type="inferred from homology"/>
<sequence>MELSLQGSLFGAPEPTVNAPNTRPSTGDLPNPFNSDHNLSDADLSKDALARPRRRNETSGSTPTAGVDPDDRADETRDDTTSTDEPAWGHHSQLKPEQLTPVLRHYVELKMAHPERVLLYRLGDFFECFFEDAITLSRELELTLTGKDAGKAIGRVPMAGIPHHAAERHCSDLIRLGYSVALCDQLETTPTKGALLKRDITRVLTPGTVLEEGMLTARRNNWLAAVVVEPATQHQPFRWGLAQADVSTGDVQVLQREGSDGLHQHLARLQASELLWSGDDPAPAWCPDRVGLTPMSSTPFSRPEAEAVLLEHYNLASLDGIGLPEVPLALQAIGGLLQYVGDTQPLEDNARVPLDVPAIVHNGDSLVLDAQTRRNLELTATQRDGLLQGSLLWAIDRTLTAMGGRCLRRWIEAPLMDRSAIQQRQTVVSRLVEKRPLRQTLRRLLRPMGDLERLAGRAGAGHAGARDLVAIADGLERLPQLAAQLNGQLTDGPAWLQALFDPQPQLQELATTVSNTLKEAPPLSLSEGGFIHDGVDPLLDGLRNQLDDQDAWLAQQERQERQGSGISTLRLQHHRTFGYFLAVSKAKTSSVPDHWIRRQTLANEERFITPELKEREGHIFQLRARACQREYELFVQLREQVGLMATSIREAARAVAGLDALTGLADVAATSNFCAPELTNNRELTLSAARHPVVEQLLVETPFTPNDVALGNGRDLVVLTGPNASGKSCYLRQIGLIQLLAQVGSWVPAKEAKIGIADRIFTRVGAVDDLAAGQSTFMVEMAETANILHHATSRSLVLLDEIGRGTATFDGLSIAWAVSEHLAGDLKARTVFATHYHELNALAGERDNVANFQVMVEETGDNLLFLHQVRPGGASRSYGIEAARLAGVPMAVVQRAQQVLDQLGD</sequence>
<accession>Q3B0S2</accession>
<feature type="chain" id="PRO_0000335231" description="DNA mismatch repair protein MutS">
    <location>
        <begin position="1"/>
        <end position="905"/>
    </location>
</feature>
<feature type="region of interest" description="Disordered" evidence="2">
    <location>
        <begin position="1"/>
        <end position="95"/>
    </location>
</feature>
<feature type="compositionally biased region" description="Basic and acidic residues" evidence="2">
    <location>
        <begin position="38"/>
        <end position="50"/>
    </location>
</feature>
<feature type="binding site" evidence="1">
    <location>
        <begin position="721"/>
        <end position="728"/>
    </location>
    <ligand>
        <name>ATP</name>
        <dbReference type="ChEBI" id="CHEBI:30616"/>
    </ligand>
</feature>
<organism>
    <name type="scientific">Synechococcus sp. (strain CC9902)</name>
    <dbReference type="NCBI Taxonomy" id="316279"/>
    <lineage>
        <taxon>Bacteria</taxon>
        <taxon>Bacillati</taxon>
        <taxon>Cyanobacteriota</taxon>
        <taxon>Cyanophyceae</taxon>
        <taxon>Synechococcales</taxon>
        <taxon>Synechococcaceae</taxon>
        <taxon>Synechococcus</taxon>
    </lineage>
</organism>